<protein>
    <recommendedName>
        <fullName evidence="13">E3 SUMO-protein ligase RanBP2</fullName>
        <ecNumber evidence="1">2.3.2.-</ecNumber>
    </recommendedName>
    <alternativeName>
        <fullName evidence="16">358 kDa nucleoporin</fullName>
    </alternativeName>
    <alternativeName>
        <fullName evidence="13">Nuclear pore complex protein Nup358</fullName>
    </alternativeName>
</protein>
<comment type="function">
    <text evidence="1 6 7 8 9 10 11">E3 SUMO-protein ligase (By similarity). Component of the nuclear pore complex (NPC), a complex required for trafficking across the nuclear envelope (PubMed:17682050). Required for nuclear import of nuclear localization signal (NLS)-containing proteins in an importin alpha/importin beta-dependent manner, but also for the nuclear import of specific proteins such as phosphorylated Mad or the sesquiterpenoid juvenile hormone receptor Met as part of the juvenile hormone signal transduction pathway (PubMed:17682050, PubMed:27979731). Plays a role in nuclear mRNA export by recruiting the mRNA transport complex composed of Nxt1 and sbr/Nxf1 to the NPC (PubMed:14729961). Essential during germline development for transposon silencing and piRNA biogenesis probably by regulating piwi localization to the nucleus (PubMed:29735528). During oogenesis, required to form granules that modulate the biogenesis of annulate lamellae containing nuclear pore complex components (PubMed:31626769).</text>
</comment>
<comment type="subunit">
    <text evidence="1 6 9 10">Part of the nuclear pore complex (By similarity). Forms a complex with Nxt1, sbr/Nxf1 and RanGAP (PubMed:14729961). Interacts (via TPR repeats) with Hsp83; the interaction is required for the nuclear import of the sesquiterpenoid juvenile hormone receptor Met (PubMed:27979731). Interacts (via N-terminus) with piwi (PubMed:29735528).</text>
</comment>
<comment type="subcellular location">
    <subcellularLocation>
        <location evidence="1">Nucleus</location>
        <location evidence="1">Nuclear pore complex</location>
    </subcellularLocation>
    <text evidence="11">Localizes to annulate lamellae, stacked membrane sheets of the endoplasmic reticulum. Localizes to granules which travel from nurse cells into the ooplasm through ring canals connecting the cytoplasm of the two cell types.</text>
</comment>
<comment type="alternative products">
    <event type="alternative splicing"/>
    <isoform>
        <id>A0A0B4K7J2-1</id>
        <name evidence="16">B</name>
        <sequence type="displayed"/>
    </isoform>
    <isoform>
        <id>A0A0B4K7J2-2</id>
        <name evidence="16">A</name>
        <sequence type="described" ref="VSP_059517"/>
    </isoform>
</comment>
<comment type="tissue specificity">
    <text evidence="10 11">Expressed in both oocytes and nurse cells (at protein level).</text>
</comment>
<comment type="developmental stage">
    <text evidence="11">Expressed during embryogenesis (at protein level).</text>
</comment>
<comment type="domain">
    <text evidence="13">Contains FG repeats. FG repeats are interaction sites for karyopherins (importins, exportins) and form probably an affinity gradient, guiding the transport proteins unidirectionally with their cargo through the NPC. FG repeat regions are highly flexible and lack ordered secondary structure. The overall conservation of FG repeats regarding exact sequence, spacing, and repeat unit length is limited.</text>
</comment>
<comment type="disruption phenotype">
    <text evidence="9 10 11">RNAi-mediated knockdown abolishes embryonic development (PubMed:31626769). RNAi-mediated knockdown in the larval fat body reduces the levels of importin beta and disrupts the nuclear import of the sesquiterpenoid juvenile hormone receptor Met and juvenile hormone signal transduction (PubMed:27979731). RNAi-mediated knockdown in the germarium results in failed piwi localization to the nucleus, failed transposon silencing and piRNA biogenesis, increased DNA damage levels and overall defective ovaries (PubMed:29735528). RNAi-mediated knockdown in egg chambers reduces numbers of annulate lamellae containing nuclear pore complex components (PubMed:31626769).</text>
</comment>
<comment type="similarity">
    <text evidence="13">Belongs to the RanBP2 E3 ligase family.</text>
</comment>
<comment type="sequence caution" evidence="13">
    <conflict type="erroneous initiation">
        <sequence resource="EMBL-CDS" id="AAM11383"/>
    </conflict>
    <text>Truncated N-terminus.</text>
</comment>
<accession>A0A0B4K7J2</accession>
<accession>D3DMF2</accession>
<accession>Q8SWV7</accession>
<accession>Q9VBU7</accession>
<proteinExistence type="evidence at protein level"/>
<evidence type="ECO:0000250" key="1">
    <source>
        <dbReference type="UniProtKB" id="P49792"/>
    </source>
</evidence>
<evidence type="ECO:0000255" key="2"/>
<evidence type="ECO:0000255" key="3">
    <source>
        <dbReference type="PROSITE-ProRule" id="PRU00164"/>
    </source>
</evidence>
<evidence type="ECO:0000255" key="4">
    <source>
        <dbReference type="PROSITE-ProRule" id="PRU00322"/>
    </source>
</evidence>
<evidence type="ECO:0000256" key="5">
    <source>
        <dbReference type="SAM" id="MobiDB-lite"/>
    </source>
</evidence>
<evidence type="ECO:0000269" key="6">
    <source>
    </source>
</evidence>
<evidence type="ECO:0000269" key="7">
    <source>
    </source>
</evidence>
<evidence type="ECO:0000269" key="8">
    <source>
    </source>
</evidence>
<evidence type="ECO:0000269" key="9">
    <source>
    </source>
</evidence>
<evidence type="ECO:0000269" key="10">
    <source>
    </source>
</evidence>
<evidence type="ECO:0000269" key="11">
    <source>
    </source>
</evidence>
<evidence type="ECO:0000303" key="12">
    <source>
    </source>
</evidence>
<evidence type="ECO:0000305" key="13"/>
<evidence type="ECO:0000312" key="14">
    <source>
        <dbReference type="EMBL" id="AAM11383.1"/>
    </source>
</evidence>
<evidence type="ECO:0000312" key="15">
    <source>
        <dbReference type="EMBL" id="ACX61603.1"/>
    </source>
</evidence>
<evidence type="ECO:0000312" key="16">
    <source>
        <dbReference type="FlyBase" id="FBgn0039302"/>
    </source>
</evidence>
<evidence type="ECO:0000312" key="17">
    <source>
        <dbReference type="Proteomes" id="UP000000803"/>
    </source>
</evidence>
<gene>
    <name evidence="16" type="primary">Nup358</name>
    <name evidence="12" type="synonym">RanBP2</name>
    <name evidence="16" type="ORF">CG11856</name>
</gene>
<organism evidence="17">
    <name type="scientific">Drosophila melanogaster</name>
    <name type="common">Fruit fly</name>
    <dbReference type="NCBI Taxonomy" id="7227"/>
    <lineage>
        <taxon>Eukaryota</taxon>
        <taxon>Metazoa</taxon>
        <taxon>Ecdysozoa</taxon>
        <taxon>Arthropoda</taxon>
        <taxon>Hexapoda</taxon>
        <taxon>Insecta</taxon>
        <taxon>Pterygota</taxon>
        <taxon>Neoptera</taxon>
        <taxon>Endopterygota</taxon>
        <taxon>Diptera</taxon>
        <taxon>Brachycera</taxon>
        <taxon>Muscomorpha</taxon>
        <taxon>Ephydroidea</taxon>
        <taxon>Drosophilidae</taxon>
        <taxon>Drosophila</taxon>
        <taxon>Sophophora</taxon>
    </lineage>
</organism>
<name>RBP2_DROME</name>
<dbReference type="EC" id="2.3.2.-" evidence="1"/>
<dbReference type="EMBL" id="AE014297">
    <property type="protein sequence ID" value="AFH06619.1"/>
    <property type="molecule type" value="Genomic_DNA"/>
</dbReference>
<dbReference type="EMBL" id="AE014297">
    <property type="protein sequence ID" value="AAF56430.2"/>
    <property type="molecule type" value="Genomic_DNA"/>
</dbReference>
<dbReference type="EMBL" id="BT100062">
    <property type="protein sequence ID" value="ACX61603.1"/>
    <property type="molecule type" value="mRNA"/>
</dbReference>
<dbReference type="EMBL" id="AY095055">
    <property type="protein sequence ID" value="AAM11383.1"/>
    <property type="status" value="ALT_INIT"/>
    <property type="molecule type" value="mRNA"/>
</dbReference>
<dbReference type="RefSeq" id="NP_001247302.1">
    <molecule id="A0A0B4K7J2-1"/>
    <property type="nucleotide sequence ID" value="NM_001260373.2"/>
</dbReference>
<dbReference type="RefSeq" id="NP_651361.2">
    <molecule id="A0A0B4K7J2-2"/>
    <property type="nucleotide sequence ID" value="NM_143104.3"/>
</dbReference>
<dbReference type="SMR" id="A0A0B4K7J2"/>
<dbReference type="ComplexPortal" id="CPX-2568">
    <property type="entry name" value="Nuclear pore complex"/>
</dbReference>
<dbReference type="FunCoup" id="A0A0B4K7J2">
    <property type="interactions" value="2253"/>
</dbReference>
<dbReference type="IntAct" id="A0A0B4K7J2">
    <property type="interactions" value="15"/>
</dbReference>
<dbReference type="MINT" id="A0A0B4K7J2"/>
<dbReference type="STRING" id="7227.FBpp0293235"/>
<dbReference type="GlyGen" id="A0A0B4K7J2">
    <property type="glycosylation" value="2 sites"/>
</dbReference>
<dbReference type="PaxDb" id="7227-FBpp0293235"/>
<dbReference type="EnsemblMetazoa" id="FBtr0084813">
    <molecule id="A0A0B4K7J2-2"/>
    <property type="protein sequence ID" value="FBpp0084188"/>
    <property type="gene ID" value="FBgn0039302"/>
</dbReference>
<dbReference type="EnsemblMetazoa" id="FBtr0304692">
    <molecule id="A0A0B4K7J2-1"/>
    <property type="protein sequence ID" value="FBpp0293235"/>
    <property type="gene ID" value="FBgn0039302"/>
</dbReference>
<dbReference type="GeneID" id="43041"/>
<dbReference type="KEGG" id="dme:Dmel_CG11856"/>
<dbReference type="UCSC" id="CG11856-RA">
    <property type="organism name" value="d. melanogaster"/>
</dbReference>
<dbReference type="AGR" id="FB:FBgn0039302"/>
<dbReference type="CTD" id="43041"/>
<dbReference type="FlyBase" id="FBgn0039302">
    <property type="gene designation" value="Nup358"/>
</dbReference>
<dbReference type="VEuPathDB" id="VectorBase:FBgn0039302"/>
<dbReference type="eggNOG" id="KOG0864">
    <property type="taxonomic scope" value="Eukaryota"/>
</dbReference>
<dbReference type="GeneTree" id="ENSGT00900000141073"/>
<dbReference type="InParanoid" id="A0A0B4K7J2"/>
<dbReference type="OMA" id="RCIGNHG"/>
<dbReference type="OrthoDB" id="2357150at2759"/>
<dbReference type="PhylomeDB" id="A0A0B4K7J2"/>
<dbReference type="Reactome" id="R-DME-159227">
    <property type="pathway name" value="Transport of the SLBP independent Mature mRNA"/>
</dbReference>
<dbReference type="Reactome" id="R-DME-159230">
    <property type="pathway name" value="Transport of the SLBP Dependant Mature mRNA"/>
</dbReference>
<dbReference type="Reactome" id="R-DME-159231">
    <property type="pathway name" value="Transport of Mature mRNA Derived from an Intronless Transcript"/>
</dbReference>
<dbReference type="Reactome" id="R-DME-159236">
    <property type="pathway name" value="Transport of Mature mRNA derived from an Intron-Containing Transcript"/>
</dbReference>
<dbReference type="Reactome" id="R-DME-3108214">
    <property type="pathway name" value="SUMOylation of DNA damage response and repair proteins"/>
</dbReference>
<dbReference type="Reactome" id="R-DME-3301854">
    <property type="pathway name" value="Nuclear Pore Complex (NPC) Disassembly"/>
</dbReference>
<dbReference type="Reactome" id="R-DME-4085377">
    <property type="pathway name" value="SUMOylation of SUMOylation proteins"/>
</dbReference>
<dbReference type="Reactome" id="R-DME-4551638">
    <property type="pathway name" value="SUMOylation of chromatin organization proteins"/>
</dbReference>
<dbReference type="Reactome" id="R-DME-4615885">
    <property type="pathway name" value="SUMOylation of DNA replication proteins"/>
</dbReference>
<dbReference type="Reactome" id="R-DME-5578749">
    <property type="pathway name" value="Transcriptional regulation by small RNAs"/>
</dbReference>
<dbReference type="SignaLink" id="A0A0B4K7J2"/>
<dbReference type="BioGRID-ORCS" id="43041">
    <property type="hits" value="2 hits in 3 CRISPR screens"/>
</dbReference>
<dbReference type="ChiTaRS" id="Nup358">
    <property type="organism name" value="fly"/>
</dbReference>
<dbReference type="GenomeRNAi" id="43041"/>
<dbReference type="PRO" id="PR:A0A0B4K7J2"/>
<dbReference type="Proteomes" id="UP000000803">
    <property type="component" value="Chromosome 3R"/>
</dbReference>
<dbReference type="Bgee" id="FBgn0039302">
    <property type="expression patterns" value="Expressed in spermatogonium in testis and 206 other cell types or tissues"/>
</dbReference>
<dbReference type="ExpressionAtlas" id="A0A0B4K7J2">
    <property type="expression patterns" value="baseline and differential"/>
</dbReference>
<dbReference type="GO" id="GO:0005642">
    <property type="term" value="C:annulate lamellae"/>
    <property type="evidence" value="ECO:0000314"/>
    <property type="project" value="UniProtKB"/>
</dbReference>
<dbReference type="GO" id="GO:0005737">
    <property type="term" value="C:cytoplasm"/>
    <property type="evidence" value="ECO:0000318"/>
    <property type="project" value="GO_Central"/>
</dbReference>
<dbReference type="GO" id="GO:0005643">
    <property type="term" value="C:nuclear pore"/>
    <property type="evidence" value="ECO:0000318"/>
    <property type="project" value="GO_Central"/>
</dbReference>
<dbReference type="GO" id="GO:0019789">
    <property type="term" value="F:SUMO transferase activity"/>
    <property type="evidence" value="ECO:0000250"/>
    <property type="project" value="FlyBase"/>
</dbReference>
<dbReference type="GO" id="GO:0008270">
    <property type="term" value="F:zinc ion binding"/>
    <property type="evidence" value="ECO:0007669"/>
    <property type="project" value="UniProtKB-KW"/>
</dbReference>
<dbReference type="GO" id="GO:0007281">
    <property type="term" value="P:germ cell development"/>
    <property type="evidence" value="ECO:0000315"/>
    <property type="project" value="UniProtKB"/>
</dbReference>
<dbReference type="GO" id="GO:0035626">
    <property type="term" value="P:juvenile hormone mediated signaling pathway"/>
    <property type="evidence" value="ECO:0000315"/>
    <property type="project" value="UniProtKB"/>
</dbReference>
<dbReference type="GO" id="GO:0051028">
    <property type="term" value="P:mRNA transport"/>
    <property type="evidence" value="ECO:0007669"/>
    <property type="project" value="UniProtKB-KW"/>
</dbReference>
<dbReference type="GO" id="GO:0006607">
    <property type="term" value="P:NLS-bearing protein import into nucleus"/>
    <property type="evidence" value="ECO:0000315"/>
    <property type="project" value="UniProtKB"/>
</dbReference>
<dbReference type="GO" id="GO:0051292">
    <property type="term" value="P:nuclear pore complex assembly"/>
    <property type="evidence" value="ECO:0000315"/>
    <property type="project" value="UniProtKB"/>
</dbReference>
<dbReference type="GO" id="GO:0008284">
    <property type="term" value="P:positive regulation of cell population proliferation"/>
    <property type="evidence" value="ECO:0000315"/>
    <property type="project" value="UniProtKB"/>
</dbReference>
<dbReference type="GO" id="GO:0010628">
    <property type="term" value="P:positive regulation of gene expression"/>
    <property type="evidence" value="ECO:0000315"/>
    <property type="project" value="UniProtKB"/>
</dbReference>
<dbReference type="GO" id="GO:1900182">
    <property type="term" value="P:positive regulation of protein localization to nucleus"/>
    <property type="evidence" value="ECO:0000315"/>
    <property type="project" value="UniProtKB"/>
</dbReference>
<dbReference type="GO" id="GO:0046833">
    <property type="term" value="P:positive regulation of RNA export from nucleus"/>
    <property type="evidence" value="ECO:0000315"/>
    <property type="project" value="UniProtKB"/>
</dbReference>
<dbReference type="GO" id="GO:0006606">
    <property type="term" value="P:protein import into nucleus"/>
    <property type="evidence" value="ECO:0000315"/>
    <property type="project" value="UniProtKB"/>
</dbReference>
<dbReference type="GO" id="GO:0032880">
    <property type="term" value="P:regulation of protein localization"/>
    <property type="evidence" value="ECO:0000315"/>
    <property type="project" value="UniProtKB"/>
</dbReference>
<dbReference type="GO" id="GO:0007419">
    <property type="term" value="P:ventral cord development"/>
    <property type="evidence" value="ECO:0007001"/>
    <property type="project" value="FlyBase"/>
</dbReference>
<dbReference type="CDD" id="cd13171">
    <property type="entry name" value="RanBD1_RanBP2_insect-like"/>
    <property type="match status" value="1"/>
</dbReference>
<dbReference type="CDD" id="cd13172">
    <property type="entry name" value="RanBD2_RanBP2_insect-like"/>
    <property type="match status" value="1"/>
</dbReference>
<dbReference type="CDD" id="cd13173">
    <property type="entry name" value="RanBD3_RanBP2_insect-like"/>
    <property type="match status" value="1"/>
</dbReference>
<dbReference type="CDD" id="cd13174">
    <property type="entry name" value="RanBD4_RanBP2_insect-like"/>
    <property type="match status" value="1"/>
</dbReference>
<dbReference type="FunFam" id="1.25.40.10:FF:000582">
    <property type="entry name" value="E3 SUMO-protein ligase RanBP2"/>
    <property type="match status" value="1"/>
</dbReference>
<dbReference type="FunFam" id="2.30.29.30:FF:000018">
    <property type="entry name" value="E3 SUMO-protein ligase RanBP2"/>
    <property type="match status" value="3"/>
</dbReference>
<dbReference type="Gene3D" id="2.30.29.30">
    <property type="entry name" value="Pleckstrin-homology domain (PH domain)/Phosphotyrosine-binding domain (PTB)"/>
    <property type="match status" value="4"/>
</dbReference>
<dbReference type="Gene3D" id="1.25.40.10">
    <property type="entry name" value="Tetratricopeptide repeat domain"/>
    <property type="match status" value="1"/>
</dbReference>
<dbReference type="Gene3D" id="4.10.1060.10">
    <property type="entry name" value="Zinc finger, RanBP2-type"/>
    <property type="match status" value="2"/>
</dbReference>
<dbReference type="InterPro" id="IPR011993">
    <property type="entry name" value="PH-like_dom_sf"/>
</dbReference>
<dbReference type="InterPro" id="IPR000156">
    <property type="entry name" value="Ran_bind_dom"/>
</dbReference>
<dbReference type="InterPro" id="IPR045255">
    <property type="entry name" value="RanBP1-like"/>
</dbReference>
<dbReference type="InterPro" id="IPR011990">
    <property type="entry name" value="TPR-like_helical_dom_sf"/>
</dbReference>
<dbReference type="InterPro" id="IPR001876">
    <property type="entry name" value="Znf_RanBP2"/>
</dbReference>
<dbReference type="InterPro" id="IPR036443">
    <property type="entry name" value="Znf_RanBP2_sf"/>
</dbReference>
<dbReference type="PANTHER" id="PTHR23138:SF87">
    <property type="entry name" value="E3 SUMO-PROTEIN LIGASE RANBP2"/>
    <property type="match status" value="1"/>
</dbReference>
<dbReference type="PANTHER" id="PTHR23138">
    <property type="entry name" value="RAN BINDING PROTEIN"/>
    <property type="match status" value="1"/>
</dbReference>
<dbReference type="Pfam" id="PF00638">
    <property type="entry name" value="Ran_BP1"/>
    <property type="match status" value="4"/>
</dbReference>
<dbReference type="Pfam" id="PF00641">
    <property type="entry name" value="Zn_ribbon_RanBP"/>
    <property type="match status" value="2"/>
</dbReference>
<dbReference type="SMART" id="SM00160">
    <property type="entry name" value="RanBD"/>
    <property type="match status" value="4"/>
</dbReference>
<dbReference type="SMART" id="SM00547">
    <property type="entry name" value="ZnF_RBZ"/>
    <property type="match status" value="2"/>
</dbReference>
<dbReference type="SUPFAM" id="SSF50729">
    <property type="entry name" value="PH domain-like"/>
    <property type="match status" value="4"/>
</dbReference>
<dbReference type="SUPFAM" id="SSF90209">
    <property type="entry name" value="Ran binding protein zinc finger-like"/>
    <property type="match status" value="1"/>
</dbReference>
<dbReference type="SUPFAM" id="SSF48452">
    <property type="entry name" value="TPR-like"/>
    <property type="match status" value="1"/>
</dbReference>
<dbReference type="PROSITE" id="PS50196">
    <property type="entry name" value="RANBD1"/>
    <property type="match status" value="4"/>
</dbReference>
<dbReference type="PROSITE" id="PS50293">
    <property type="entry name" value="TPR_REGION"/>
    <property type="match status" value="1"/>
</dbReference>
<dbReference type="PROSITE" id="PS01358">
    <property type="entry name" value="ZF_RANBP2_1"/>
    <property type="match status" value="2"/>
</dbReference>
<dbReference type="PROSITE" id="PS50199">
    <property type="entry name" value="ZF_RANBP2_2"/>
    <property type="match status" value="2"/>
</dbReference>
<sequence length="2718" mass="298931">MFTTRKEVDAHVHKMLGKLQPGRERDIKGLAVARLYMKVQEYPKAIEYLNGYLRVRDDAVGHNMIATCYSRLNPPDVTEALQHYQRSIQIDPRQSEVVIDACELLVKENNASITECARYWLDQANSLDLSGNKQVFNLRMRVNLADSNGERDDTSGGDGEQNTLEILMYKELQARPQDVNIRIQLLRSYVEKMKIDQAFNYALKTELESKNCTSQSNEWYEQIWMVLFKIEMAKDVKKNWRFWHFALHTLDRLVQLSLEGSGLADSSKQLFRLDQYLFKFSTSIERSGDAPQRDLHQACIDHFTGQLLLHAVTLIFKREVLANKNKWMSTLRSALPLLLLGYQVRPIDDSSTNQWIKHCDAEQKQLIQMWRPQGAFRCAQLGRTLLGCLDRSQMEIKNDRENAEFDENKNSGNSMPGLFADSEELLASAHQQCLDKSWRSQIYQQLFTHAEHKLKDTSSHLVRNLRLQLPLFEWPNLAHIENYELQALVLPPHSLAQHVYLALGTDPNKLGDAPRVVFYEGFQRDVKQNLNYCGQDSISQVDVDLYLYATTIQTRRKLQIQREVYDSSNLGNRNAAARPHMMPFANLVGQLGAPEQSNWWDLVVRLNSNQLITEGNRAEQRAQLQHGLEAVRGVNGPKADAIIIFQLGKILNSRSDRSSLEARIDTLYRQGFSILRHQHNQQMESYVRVFKYGSAGSTAAWQDLQSLAEEAVTYFSEKMFRIGQYEQFLDEVRGLHLPMAYFLQSEACHHLEESSKLPRTSRDRYSERRRECLQKTQKLIKNDDKHPLIAAMHRHQQDRNSRGIDNSFGSPDVHNNSSAYEDAEDDFYSHAAFSANRSRRQLEVTPVTPIVMAQPSQEMEQAVKQISKSLCVLKDDVSVGMEAMRQDIKVLTEKFTGLEDLLKKIKISSRDTPTRDVDPAAALGLDDLFIIEDALAEHQQQQQHQQQQSHNQGAIHPVVPNPYTSGFYNGMPNTPSAQERFLQGPYGSPMFNQNQMYNYYAAQAQAQAQAQFLRTPPAPGSIPPPNMFGPRNPNFGLPSMFPPPTVPSVAPYIDAMGNFTQPPPSLIPPPAQPAAPPAPLNILESKPVVALPTPGFFNTTTPVFGASPIQVPQSKPLTVPTVPIPSTAPAPPIAGTVNPPATTAVPPPVHIPQVAPSVPAQPPAPAPVSVPSMFNRALNNQPVEKEPPANVVITSSDPLPKPTTASVQPTLSVTIPAQHIKPSLVQAPEQPAQSAQPAQPSVSGVGSLSFNFGSKSSESPFSFKTQVAKAAAEKQKEQEEAEQNQSGATDPNKTLPQDTSADDYDPRPDFKPIIPLPDEVEVRTGEEGEDIKFTSRAKLFRYVDKEWKERGTGVIKILCDKATGVSRVLMRRDQTHKVCANHTITADITINVANQDKDKKSLLWAANDFADEQVTLERFLVRFKTGELAEEFRVAFTKASEAAKSKETVKPTVNTAEKGSTATAPAAFKSFVTSTPAANSLINKPQEQTKTQPNPDPPATAAKSLFGTLSVSAAPATSAPASATPFASFSFTPNGSSGFGTSTASPFGNLSFGTASAVGSGNNTTLFTTALIKDNTVQGKTLQQESQLNKSNSSDAEEEYVPTAQFVPVIALPDIVEVVTGEENEDVLFEHRAKLLRWDKEANEWKERGLGNMKLLRDRTDPNKVRLLMRREQVHKLCCNQRLLPETKFTYATNCKAAVTWGAQDYSDEELTTALLAVRFKSQDICQQFLEAVQKAQQSIGNEPKKEEVPSAAGEKEKPIKGFGDAFKPKAGSWNCQACYTNNGQDQLYCLACQEPKDATVPPKQSGLDQGNALNLTTSSSNKFSFGFASSATLPATGGFSFGGATQPKEKPAVAVVTASASAPTSVQTAALGFGKSSMTSGFGDAFKPAVGSWSCSACYVNNPGESLYCSACDAPKNDTVPQKEKSLGSGLNLPPTSKFSFGFGAAAAGDKDQAGDGATFNFAAMPAAVAPTTSIGSSSFTFSMTKPKPDQQQPNSTAAKEDEDNDSQEVEEEENNTYFSPVIPLPDKIDVKTGEEDEELLYVHKAKLYRLNESDWKERGLGDVKILRHRQTKKLRVVMRREQVFKICLNHVLNENVVYREKTETSWMFAVHDFSEGESVLERFTLRFKNKEVAQGFMEAIKNALNETAKPIEDSPVVGSVSQSTEANKPSQKNDGAAKSRGGESEVLDVGKTSSVRPTTHEVIPPLPMTLPLLTLPQPLAKPNDYQTPATILFKGSSLSRNNSSASEASKTPSSAFIFGSTDKSEPGKDAGPLANLQKLASGEGQGNVLGSIFRSGSSNENSSDGSVKFFFGGGNKAAEQQKKDSSESVFGGNKADSQSPATQEAPKLAFGGIAAPVFGDANPFGGHKVNLQKSDGKEEPKSIIGGTPLLFGGSNAFGIPKIETQSPAKDFVFGSAPAFGQMATFSFTAAKNEKEKDITSNNTTDLKAEGKEKKELVPETTSTFADLAKTGSTFADLASNPGGTFADLANKTGNDFANLSANSQGTTVGFNKSAGGGFYNLTHQNAFKNFESPQATEECDDDGDATTDDNYDPHYDAIVELPDEIVVTTGEENETKLFGERAKLYRYDAESKQWKERGVGEIKVLEHPELQTFRLIMRQEQIHKLVLNMNISASLQMDYMNAQMKSFLWAGYNYAVDAEGKVDTEGVLERLACRFAKEEIASEFLNTVNSCIKRAKALQGDEENKNDDAPEEQASS</sequence>
<feature type="chain" id="PRO_0000443733" description="E3 SUMO-protein ligase RanBP2">
    <location>
        <begin position="1"/>
        <end position="2718"/>
    </location>
</feature>
<feature type="repeat" description="TPR 1" evidence="2">
    <location>
        <begin position="26"/>
        <end position="58"/>
    </location>
</feature>
<feature type="repeat" description="TPR 2" evidence="2">
    <location>
        <begin position="59"/>
        <end position="94"/>
    </location>
</feature>
<feature type="repeat" description="1" evidence="13">
    <location>
        <begin position="808"/>
        <end position="809"/>
    </location>
</feature>
<feature type="repeat" description="2" evidence="13">
    <location>
        <begin position="1028"/>
        <end position="1029"/>
    </location>
</feature>
<feature type="repeat" description="3" evidence="13">
    <location>
        <begin position="1035"/>
        <end position="1036"/>
    </location>
</feature>
<feature type="repeat" description="4" evidence="13">
    <location>
        <begin position="1104"/>
        <end position="1105"/>
    </location>
</feature>
<feature type="repeat" description="5" evidence="13">
    <location>
        <begin position="1252"/>
        <end position="1253"/>
    </location>
</feature>
<feature type="domain" description="RanBD1 1" evidence="3">
    <location>
        <begin position="1309"/>
        <end position="1445"/>
    </location>
</feature>
<feature type="repeat" description="6" evidence="13">
    <location>
        <begin position="1506"/>
        <end position="1507"/>
    </location>
</feature>
<feature type="repeat" description="7" evidence="13">
    <location>
        <begin position="1539"/>
        <end position="1540"/>
    </location>
</feature>
<feature type="repeat" description="8" evidence="13">
    <location>
        <begin position="1547"/>
        <end position="1548"/>
    </location>
</feature>
<feature type="repeat" description="9" evidence="13">
    <location>
        <begin position="1552"/>
        <end position="1553"/>
    </location>
</feature>
<feature type="domain" description="RanBD1 2" evidence="3">
    <location>
        <begin position="1605"/>
        <end position="1742"/>
    </location>
</feature>
<feature type="repeat" description="10" evidence="13">
    <location>
        <begin position="1763"/>
        <end position="1764"/>
    </location>
</feature>
<feature type="repeat" description="11" evidence="13">
    <location>
        <begin position="1826"/>
        <end position="1827"/>
    </location>
</feature>
<feature type="repeat" description="12" evidence="13">
    <location>
        <begin position="1842"/>
        <end position="1843"/>
    </location>
</feature>
<feature type="repeat" description="13" evidence="13">
    <location>
        <begin position="1874"/>
        <end position="1875"/>
    </location>
</feature>
<feature type="repeat" description="14" evidence="13">
    <location>
        <begin position="1883"/>
        <end position="1884"/>
    </location>
</feature>
<feature type="repeat" description="15" evidence="13">
    <location>
        <begin position="1942"/>
        <end position="1943"/>
    </location>
</feature>
<feature type="repeat" description="16" evidence="13">
    <location>
        <begin position="1944"/>
        <end position="1945"/>
    </location>
</feature>
<feature type="domain" description="RanBD1 3" evidence="3">
    <location>
        <begin position="2019"/>
        <end position="2151"/>
    </location>
</feature>
<feature type="repeat" description="17" evidence="13">
    <location>
        <begin position="2260"/>
        <end position="2261"/>
    </location>
</feature>
<feature type="repeat" description="18" evidence="13">
    <location>
        <begin position="2313"/>
        <end position="2314"/>
    </location>
</feature>
<feature type="repeat" description="19" evidence="13">
    <location>
        <begin position="2332"/>
        <end position="2333"/>
    </location>
</feature>
<feature type="repeat" description="20" evidence="13">
    <location>
        <begin position="2352"/>
        <end position="2353"/>
    </location>
</feature>
<feature type="repeat" description="21" evidence="13">
    <location>
        <begin position="2360"/>
        <end position="2361"/>
    </location>
</feature>
<feature type="repeat" description="22" evidence="13">
    <location>
        <begin position="2366"/>
        <end position="2367"/>
    </location>
</feature>
<feature type="repeat" description="23" evidence="13">
    <location>
        <begin position="2393"/>
        <end position="2394"/>
    </location>
</feature>
<feature type="repeat" description="24" evidence="13">
    <location>
        <begin position="2399"/>
        <end position="2400"/>
    </location>
</feature>
<feature type="repeat" description="25" evidence="13">
    <location>
        <begin position="2415"/>
        <end position="2416"/>
    </location>
</feature>
<feature type="repeat" description="26" evidence="13">
    <location>
        <begin position="2421"/>
        <end position="2422"/>
    </location>
</feature>
<feature type="domain" description="RanBD1 4" evidence="3">
    <location>
        <begin position="2556"/>
        <end position="2699"/>
    </location>
</feature>
<feature type="repeat" description="27" evidence="13">
    <location>
        <begin position="2580"/>
        <end position="2581"/>
    </location>
</feature>
<feature type="zinc finger region" description="RanBP2-type 1" evidence="4">
    <location>
        <begin position="1770"/>
        <end position="1799"/>
    </location>
</feature>
<feature type="zinc finger region" description="RanBP2-type 2" evidence="4">
    <location>
        <begin position="1890"/>
        <end position="1919"/>
    </location>
</feature>
<feature type="region of interest" description="Sufficient for interaction with piwi" evidence="10">
    <location>
        <begin position="1"/>
        <end position="200"/>
    </location>
</feature>
<feature type="region of interest" description="Sufficient for interaction with Hsp83" evidence="9">
    <location>
        <begin position="1"/>
        <end position="100"/>
    </location>
</feature>
<feature type="region of interest" description="Disordered" evidence="5">
    <location>
        <begin position="796"/>
        <end position="816"/>
    </location>
</feature>
<feature type="region of interest" description="27 X 2 AA repeats of F-G" evidence="13">
    <location>
        <begin position="808"/>
        <end position="2581"/>
    </location>
</feature>
<feature type="region of interest" description="Disordered" evidence="5">
    <location>
        <begin position="937"/>
        <end position="959"/>
    </location>
</feature>
<feature type="region of interest" description="Disordered" evidence="5">
    <location>
        <begin position="1181"/>
        <end position="1208"/>
    </location>
</feature>
<feature type="region of interest" description="Disordered" evidence="5">
    <location>
        <begin position="1263"/>
        <end position="1314"/>
    </location>
</feature>
<feature type="region of interest" description="Disordered" evidence="5">
    <location>
        <begin position="1483"/>
        <end position="1502"/>
    </location>
</feature>
<feature type="region of interest" description="Disordered" evidence="5">
    <location>
        <begin position="1738"/>
        <end position="1761"/>
    </location>
</feature>
<feature type="region of interest" description="Disordered" evidence="5">
    <location>
        <begin position="1981"/>
        <end position="2021"/>
    </location>
</feature>
<feature type="region of interest" description="Disordered" evidence="5">
    <location>
        <begin position="2154"/>
        <end position="2204"/>
    </location>
</feature>
<feature type="region of interest" description="Disordered" evidence="5">
    <location>
        <begin position="2239"/>
        <end position="2273"/>
    </location>
</feature>
<feature type="region of interest" description="Disordered" evidence="5">
    <location>
        <begin position="2320"/>
        <end position="2346"/>
    </location>
</feature>
<feature type="compositionally biased region" description="Polar residues" evidence="5">
    <location>
        <begin position="803"/>
        <end position="816"/>
    </location>
</feature>
<feature type="compositionally biased region" description="Low complexity" evidence="5">
    <location>
        <begin position="938"/>
        <end position="948"/>
    </location>
</feature>
<feature type="compositionally biased region" description="Polar residues" evidence="5">
    <location>
        <begin position="1192"/>
        <end position="1208"/>
    </location>
</feature>
<feature type="compositionally biased region" description="Polar residues" evidence="5">
    <location>
        <begin position="1284"/>
        <end position="1299"/>
    </location>
</feature>
<feature type="compositionally biased region" description="Polar residues" evidence="5">
    <location>
        <begin position="1483"/>
        <end position="1493"/>
    </location>
</feature>
<feature type="compositionally biased region" description="Basic and acidic residues" evidence="5">
    <location>
        <begin position="1743"/>
        <end position="1760"/>
    </location>
</feature>
<feature type="compositionally biased region" description="Acidic residues" evidence="5">
    <location>
        <begin position="2002"/>
        <end position="2016"/>
    </location>
</feature>
<feature type="compositionally biased region" description="Polar residues" evidence="5">
    <location>
        <begin position="2161"/>
        <end position="2175"/>
    </location>
</feature>
<feature type="compositionally biased region" description="Low complexity" evidence="5">
    <location>
        <begin position="2239"/>
        <end position="2257"/>
    </location>
</feature>
<feature type="splice variant" id="VSP_059517" description="In isoform A.">
    <location>
        <begin position="2197"/>
        <end position="2219"/>
    </location>
</feature>
<keyword id="KW-0025">Alternative splicing</keyword>
<keyword id="KW-1017">Isopeptide bond</keyword>
<keyword id="KW-0479">Metal-binding</keyword>
<keyword id="KW-0509">mRNA transport</keyword>
<keyword id="KW-0906">Nuclear pore complex</keyword>
<keyword id="KW-0539">Nucleus</keyword>
<keyword id="KW-0597">Phosphoprotein</keyword>
<keyword id="KW-0653">Protein transport</keyword>
<keyword id="KW-1185">Reference proteome</keyword>
<keyword id="KW-0677">Repeat</keyword>
<keyword id="KW-0802">TPR repeat</keyword>
<keyword id="KW-0808">Transferase</keyword>
<keyword id="KW-0811">Translocation</keyword>
<keyword id="KW-0813">Transport</keyword>
<keyword id="KW-0833">Ubl conjugation pathway</keyword>
<keyword id="KW-0862">Zinc</keyword>
<keyword id="KW-0863">Zinc-finger</keyword>
<reference evidence="17" key="1">
    <citation type="journal article" date="2000" name="Science">
        <title>The genome sequence of Drosophila melanogaster.</title>
        <authorList>
            <person name="Adams M.D."/>
            <person name="Celniker S.E."/>
            <person name="Holt R.A."/>
            <person name="Evans C.A."/>
            <person name="Gocayne J.D."/>
            <person name="Amanatides P.G."/>
            <person name="Scherer S.E."/>
            <person name="Li P.W."/>
            <person name="Hoskins R.A."/>
            <person name="Galle R.F."/>
            <person name="George R.A."/>
            <person name="Lewis S.E."/>
            <person name="Richards S."/>
            <person name="Ashburner M."/>
            <person name="Henderson S.N."/>
            <person name="Sutton G.G."/>
            <person name="Wortman J.R."/>
            <person name="Yandell M.D."/>
            <person name="Zhang Q."/>
            <person name="Chen L.X."/>
            <person name="Brandon R.C."/>
            <person name="Rogers Y.-H.C."/>
            <person name="Blazej R.G."/>
            <person name="Champe M."/>
            <person name="Pfeiffer B.D."/>
            <person name="Wan K.H."/>
            <person name="Doyle C."/>
            <person name="Baxter E.G."/>
            <person name="Helt G."/>
            <person name="Nelson C.R."/>
            <person name="Miklos G.L.G."/>
            <person name="Abril J.F."/>
            <person name="Agbayani A."/>
            <person name="An H.-J."/>
            <person name="Andrews-Pfannkoch C."/>
            <person name="Baldwin D."/>
            <person name="Ballew R.M."/>
            <person name="Basu A."/>
            <person name="Baxendale J."/>
            <person name="Bayraktaroglu L."/>
            <person name="Beasley E.M."/>
            <person name="Beeson K.Y."/>
            <person name="Benos P.V."/>
            <person name="Berman B.P."/>
            <person name="Bhandari D."/>
            <person name="Bolshakov S."/>
            <person name="Borkova D."/>
            <person name="Botchan M.R."/>
            <person name="Bouck J."/>
            <person name="Brokstein P."/>
            <person name="Brottier P."/>
            <person name="Burtis K.C."/>
            <person name="Busam D.A."/>
            <person name="Butler H."/>
            <person name="Cadieu E."/>
            <person name="Center A."/>
            <person name="Chandra I."/>
            <person name="Cherry J.M."/>
            <person name="Cawley S."/>
            <person name="Dahlke C."/>
            <person name="Davenport L.B."/>
            <person name="Davies P."/>
            <person name="de Pablos B."/>
            <person name="Delcher A."/>
            <person name="Deng Z."/>
            <person name="Mays A.D."/>
            <person name="Dew I."/>
            <person name="Dietz S.M."/>
            <person name="Dodson K."/>
            <person name="Doup L.E."/>
            <person name="Downes M."/>
            <person name="Dugan-Rocha S."/>
            <person name="Dunkov B.C."/>
            <person name="Dunn P."/>
            <person name="Durbin K.J."/>
            <person name="Evangelista C.C."/>
            <person name="Ferraz C."/>
            <person name="Ferriera S."/>
            <person name="Fleischmann W."/>
            <person name="Fosler C."/>
            <person name="Gabrielian A.E."/>
            <person name="Garg N.S."/>
            <person name="Gelbart W.M."/>
            <person name="Glasser K."/>
            <person name="Glodek A."/>
            <person name="Gong F."/>
            <person name="Gorrell J.H."/>
            <person name="Gu Z."/>
            <person name="Guan P."/>
            <person name="Harris M."/>
            <person name="Harris N.L."/>
            <person name="Harvey D.A."/>
            <person name="Heiman T.J."/>
            <person name="Hernandez J.R."/>
            <person name="Houck J."/>
            <person name="Hostin D."/>
            <person name="Houston K.A."/>
            <person name="Howland T.J."/>
            <person name="Wei M.-H."/>
            <person name="Ibegwam C."/>
            <person name="Jalali M."/>
            <person name="Kalush F."/>
            <person name="Karpen G.H."/>
            <person name="Ke Z."/>
            <person name="Kennison J.A."/>
            <person name="Ketchum K.A."/>
            <person name="Kimmel B.E."/>
            <person name="Kodira C.D."/>
            <person name="Kraft C.L."/>
            <person name="Kravitz S."/>
            <person name="Kulp D."/>
            <person name="Lai Z."/>
            <person name="Lasko P."/>
            <person name="Lei Y."/>
            <person name="Levitsky A.A."/>
            <person name="Li J.H."/>
            <person name="Li Z."/>
            <person name="Liang Y."/>
            <person name="Lin X."/>
            <person name="Liu X."/>
            <person name="Mattei B."/>
            <person name="McIntosh T.C."/>
            <person name="McLeod M.P."/>
            <person name="McPherson D."/>
            <person name="Merkulov G."/>
            <person name="Milshina N.V."/>
            <person name="Mobarry C."/>
            <person name="Morris J."/>
            <person name="Moshrefi A."/>
            <person name="Mount S.M."/>
            <person name="Moy M."/>
            <person name="Murphy B."/>
            <person name="Murphy L."/>
            <person name="Muzny D.M."/>
            <person name="Nelson D.L."/>
            <person name="Nelson D.R."/>
            <person name="Nelson K.A."/>
            <person name="Nixon K."/>
            <person name="Nusskern D.R."/>
            <person name="Pacleb J.M."/>
            <person name="Palazzolo M."/>
            <person name="Pittman G.S."/>
            <person name="Pan S."/>
            <person name="Pollard J."/>
            <person name="Puri V."/>
            <person name="Reese M.G."/>
            <person name="Reinert K."/>
            <person name="Remington K."/>
            <person name="Saunders R.D.C."/>
            <person name="Scheeler F."/>
            <person name="Shen H."/>
            <person name="Shue B.C."/>
            <person name="Siden-Kiamos I."/>
            <person name="Simpson M."/>
            <person name="Skupski M.P."/>
            <person name="Smith T.J."/>
            <person name="Spier E."/>
            <person name="Spradling A.C."/>
            <person name="Stapleton M."/>
            <person name="Strong R."/>
            <person name="Sun E."/>
            <person name="Svirskas R."/>
            <person name="Tector C."/>
            <person name="Turner R."/>
            <person name="Venter E."/>
            <person name="Wang A.H."/>
            <person name="Wang X."/>
            <person name="Wang Z.-Y."/>
            <person name="Wassarman D.A."/>
            <person name="Weinstock G.M."/>
            <person name="Weissenbach J."/>
            <person name="Williams S.M."/>
            <person name="Woodage T."/>
            <person name="Worley K.C."/>
            <person name="Wu D."/>
            <person name="Yang S."/>
            <person name="Yao Q.A."/>
            <person name="Ye J."/>
            <person name="Yeh R.-F."/>
            <person name="Zaveri J.S."/>
            <person name="Zhan M."/>
            <person name="Zhang G."/>
            <person name="Zhao Q."/>
            <person name="Zheng L."/>
            <person name="Zheng X.H."/>
            <person name="Zhong F.N."/>
            <person name="Zhong W."/>
            <person name="Zhou X."/>
            <person name="Zhu S.C."/>
            <person name="Zhu X."/>
            <person name="Smith H.O."/>
            <person name="Gibbs R.A."/>
            <person name="Myers E.W."/>
            <person name="Rubin G.M."/>
            <person name="Venter J.C."/>
        </authorList>
    </citation>
    <scope>NUCLEOTIDE SEQUENCE [LARGE SCALE GENOMIC DNA]</scope>
    <source>
        <strain evidence="17">Berkeley</strain>
    </source>
</reference>
<reference evidence="17" key="2">
    <citation type="journal article" date="2002" name="Genome Biol.">
        <title>Annotation of the Drosophila melanogaster euchromatic genome: a systematic review.</title>
        <authorList>
            <person name="Misra S."/>
            <person name="Crosby M.A."/>
            <person name="Mungall C.J."/>
            <person name="Matthews B.B."/>
            <person name="Campbell K.S."/>
            <person name="Hradecky P."/>
            <person name="Huang Y."/>
            <person name="Kaminker J.S."/>
            <person name="Millburn G.H."/>
            <person name="Prochnik S.E."/>
            <person name="Smith C.D."/>
            <person name="Tupy J.L."/>
            <person name="Whitfield E.J."/>
            <person name="Bayraktaroglu L."/>
            <person name="Berman B.P."/>
            <person name="Bettencourt B.R."/>
            <person name="Celniker S.E."/>
            <person name="de Grey A.D.N.J."/>
            <person name="Drysdale R.A."/>
            <person name="Harris N.L."/>
            <person name="Richter J."/>
            <person name="Russo S."/>
            <person name="Schroeder A.J."/>
            <person name="Shu S.Q."/>
            <person name="Stapleton M."/>
            <person name="Yamada C."/>
            <person name="Ashburner M."/>
            <person name="Gelbart W.M."/>
            <person name="Rubin G.M."/>
            <person name="Lewis S.E."/>
        </authorList>
    </citation>
    <scope>GENOME REANNOTATION</scope>
    <source>
        <strain evidence="17">Berkeley</strain>
    </source>
</reference>
<reference evidence="15" key="3">
    <citation type="submission" date="2009-10" db="EMBL/GenBank/DDBJ databases">
        <authorList>
            <person name="Carlson J."/>
            <person name="Booth B."/>
            <person name="Frise E."/>
            <person name="Park S."/>
            <person name="Wan K."/>
            <person name="Yu C."/>
            <person name="Celniker S."/>
        </authorList>
    </citation>
    <scope>NUCLEOTIDE SEQUENCE [LARGE SCALE MRNA] OF 1-1729 (ISOFORM A/B)</scope>
    <source>
        <strain evidence="15">Berkeley</strain>
        <tissue evidence="15">Embryo</tissue>
    </source>
</reference>
<reference evidence="14" key="4">
    <citation type="journal article" date="2002" name="Genome Biol.">
        <title>A Drosophila full-length cDNA resource.</title>
        <authorList>
            <person name="Stapleton M."/>
            <person name="Carlson J.W."/>
            <person name="Brokstein P."/>
            <person name="Yu C."/>
            <person name="Champe M."/>
            <person name="George R.A."/>
            <person name="Guarin H."/>
            <person name="Kronmiller B."/>
            <person name="Pacleb J.M."/>
            <person name="Park S."/>
            <person name="Wan K.H."/>
            <person name="Rubin G.M."/>
            <person name="Celniker S.E."/>
        </authorList>
    </citation>
    <scope>NUCLEOTIDE SEQUENCE [LARGE SCALE MRNA] OF 1321-2718 (ISOFORM B)</scope>
    <source>
        <strain evidence="14">Berkeley</strain>
        <tissue evidence="14">Embryo</tissue>
    </source>
</reference>
<reference evidence="13" key="5">
    <citation type="journal article" date="2004" name="Mol. Cell. Biol.">
        <title>RanBP2/Nup358 provides a major binding site for NXF1-p15 dimers at the nuclear pore complex and functions in nuclear mRNA export.</title>
        <authorList>
            <person name="Forler D."/>
            <person name="Rabut G."/>
            <person name="Ciccarelli F.D."/>
            <person name="Herold A."/>
            <person name="Koecher T."/>
            <person name="Niggeweg R."/>
            <person name="Bork P."/>
            <person name="Ellenberg J."/>
            <person name="Izaurralde E."/>
        </authorList>
    </citation>
    <scope>FUNCTION</scope>
    <scope>IDENTIFICATION IN A COMPLEX WITH NXT1; SBR AND RANGAP</scope>
</reference>
<reference evidence="13" key="6">
    <citation type="journal article" date="2007" name="J. Cell Biol.">
        <title>Distinct functions of the Drosophila Nup153 and Nup214 FG domains in nuclear protein transport.</title>
        <authorList>
            <person name="Sabri N."/>
            <person name="Roth P."/>
            <person name="Xylourgidis N."/>
            <person name="Sadeghifar F."/>
            <person name="Adler J."/>
            <person name="Samakovlis C."/>
        </authorList>
    </citation>
    <scope>FUNCTION</scope>
</reference>
<reference evidence="13" key="7">
    <citation type="journal article" date="2010" name="Mol. Cell. Biol.">
        <title>Specific nucleoporin requirement for Smad nuclear translocation.</title>
        <authorList>
            <person name="Chen X."/>
            <person name="Xu L."/>
        </authorList>
    </citation>
    <scope>FUNCTION</scope>
</reference>
<reference evidence="13" key="8">
    <citation type="journal article" date="2017" name="Insect Biochem. Mol. Biol.">
        <title>Nucleoporin Nup358 facilitates nuclear import of Methoprene-tolerant (Met) in an importin beta- and Hsp83-dependent manner.</title>
        <authorList>
            <person name="He Q."/>
            <person name="Zhang Y."/>
            <person name="Zhang X."/>
            <person name="Xu D."/>
            <person name="Dong W."/>
            <person name="Li S."/>
            <person name="Wu R."/>
        </authorList>
    </citation>
    <scope>FUNCTION</scope>
    <scope>INTERACTION WITH HSP83</scope>
    <scope>DOMAIN</scope>
    <scope>DISRUPTION PHENOTYPE</scope>
</reference>
<reference key="9">
    <citation type="journal article" date="2018" name="J. Biol. Chem.">
        <title>A critical role for nucleoporin 358 (Nup358) in transposon silencing and piRNA biogenesis in Drosophila.</title>
        <authorList>
            <person name="Parikh R.Y."/>
            <person name="Lin H."/>
            <person name="Gangaraju V.K."/>
        </authorList>
    </citation>
    <scope>FUNCTION</scope>
    <scope>INTERACTION WITH PIWI</scope>
    <scope>TISSUE SPECIFICITY</scope>
    <scope>DISRUPTION PHENOTYPE</scope>
</reference>
<reference key="10">
    <citation type="journal article" date="2019" name="Cell">
        <title>Nuclear Pores Assemble from Nucleoporin Condensates During Oogenesis.</title>
        <authorList>
            <person name="Hampoelz B."/>
            <person name="Schwarz A."/>
            <person name="Ronchi P."/>
            <person name="Bragulat-Teixidor H."/>
            <person name="Tischer C."/>
            <person name="Gaspar I."/>
            <person name="Ephrussi A."/>
            <person name="Schwab Y."/>
            <person name="Beck M."/>
        </authorList>
    </citation>
    <scope>FUNCTION</scope>
    <scope>SUBCELLULAR LOCATION</scope>
    <scope>TISSUE SPECIFICITY</scope>
    <scope>DEVELOPMENTAL STAGE</scope>
    <scope>DISRUPTION PHENOTYPE</scope>
</reference>